<gene>
    <name type="primary">TPP1</name>
    <name type="ordered locus">Os02g0661100</name>
    <name type="ordered locus">LOC_Os02g44230</name>
    <name type="ORF">OsJ_07820</name>
    <name type="ORF">P0516F12.9</name>
    <name type="ORF">P0708H12.35</name>
</gene>
<comment type="function">
    <text evidence="2 3 4">Removes the phosphate from trehalose 6-phosphate to produce free trehalose. Trehalose accumulation in plant improves abiotic stress tolerance.</text>
</comment>
<comment type="catalytic activity">
    <reaction evidence="2 3">
        <text>alpha,alpha-trehalose 6-phosphate + H2O = alpha,alpha-trehalose + phosphate</text>
        <dbReference type="Rhea" id="RHEA:23420"/>
        <dbReference type="ChEBI" id="CHEBI:15377"/>
        <dbReference type="ChEBI" id="CHEBI:16551"/>
        <dbReference type="ChEBI" id="CHEBI:43474"/>
        <dbReference type="ChEBI" id="CHEBI:58429"/>
        <dbReference type="EC" id="3.1.3.12"/>
    </reaction>
</comment>
<comment type="cofactor">
    <cofactor evidence="1">
        <name>a divalent metal cation</name>
        <dbReference type="ChEBI" id="CHEBI:60240"/>
    </cofactor>
</comment>
<comment type="biophysicochemical properties">
    <kinetics>
        <KM evidence="3">92.1 uM for trehalose 6-phosphate</KM>
    </kinetics>
    <phDependence>
        <text evidence="3">Optimum pH is 6.5-7.0.</text>
    </phDependence>
</comment>
<comment type="pathway">
    <text>Glycan biosynthesis; trehalose biosynthesis.</text>
</comment>
<comment type="tissue specificity">
    <text evidence="3">Expressed in roots and shoots.</text>
</comment>
<comment type="induction">
    <text evidence="2 3 4">By cold, drought, salt stress and abscisic acid (ABA).</text>
</comment>
<comment type="miscellaneous">
    <text evidence="6">Over-expression of TPP1 increases trehalose levels and enhances tolerance to salt and cold stresses.</text>
</comment>
<comment type="similarity">
    <text evidence="5">Belongs to the trehalose phosphatase family.</text>
</comment>
<evidence type="ECO:0000250" key="1"/>
<evidence type="ECO:0000269" key="2">
    <source>
    </source>
</evidence>
<evidence type="ECO:0000269" key="3">
    <source>
    </source>
</evidence>
<evidence type="ECO:0000269" key="4">
    <source>
    </source>
</evidence>
<evidence type="ECO:0000305" key="5"/>
<evidence type="ECO:0000305" key="6">
    <source>
    </source>
</evidence>
<protein>
    <recommendedName>
        <fullName>Probable trehalose-phosphate phosphatase 1</fullName>
        <shortName>OsTPP1</shortName>
        <ecNumber>3.1.3.12</ecNumber>
    </recommendedName>
    <alternativeName>
        <fullName>Trehalose 6-phosphate phosphatase</fullName>
    </alternativeName>
</protein>
<reference key="1">
    <citation type="journal article" date="2005" name="Plant Mol. Biol.">
        <title>Functional identification of a trehalose 6-phosphate phosphatase gene that is involved in transient induction of trehalose biosynthesis during chilling stress in rice.</title>
        <authorList>
            <person name="Pramanik M.H."/>
            <person name="Imai R."/>
        </authorList>
    </citation>
    <scope>NUCLEOTIDE SEQUENCE [MRNA]</scope>
    <scope>FUNCTION</scope>
    <scope>CATALYTIC ACTIVITY</scope>
    <scope>INDUCTION</scope>
    <scope>GENE FAMILY</scope>
    <scope>NOMENCLATURE</scope>
    <source>
        <strain>cv. Yukihikari</strain>
    </source>
</reference>
<reference key="2">
    <citation type="journal article" date="2005" name="Nature">
        <title>The map-based sequence of the rice genome.</title>
        <authorList>
            <consortium name="International rice genome sequencing project (IRGSP)"/>
        </authorList>
    </citation>
    <scope>NUCLEOTIDE SEQUENCE [LARGE SCALE GENOMIC DNA]</scope>
    <source>
        <strain>cv. Nipponbare</strain>
    </source>
</reference>
<reference key="3">
    <citation type="journal article" date="2008" name="Nucleic Acids Res.">
        <title>The rice annotation project database (RAP-DB): 2008 update.</title>
        <authorList>
            <consortium name="The rice annotation project (RAP)"/>
        </authorList>
    </citation>
    <scope>GENOME REANNOTATION</scope>
    <source>
        <strain>cv. Nipponbare</strain>
    </source>
</reference>
<reference key="4">
    <citation type="journal article" date="2013" name="Rice">
        <title>Improvement of the Oryza sativa Nipponbare reference genome using next generation sequence and optical map data.</title>
        <authorList>
            <person name="Kawahara Y."/>
            <person name="de la Bastide M."/>
            <person name="Hamilton J.P."/>
            <person name="Kanamori H."/>
            <person name="McCombie W.R."/>
            <person name="Ouyang S."/>
            <person name="Schwartz D.C."/>
            <person name="Tanaka T."/>
            <person name="Wu J."/>
            <person name="Zhou S."/>
            <person name="Childs K.L."/>
            <person name="Davidson R.M."/>
            <person name="Lin H."/>
            <person name="Quesada-Ocampo L."/>
            <person name="Vaillancourt B."/>
            <person name="Sakai H."/>
            <person name="Lee S.S."/>
            <person name="Kim J."/>
            <person name="Numa H."/>
            <person name="Itoh T."/>
            <person name="Buell C.R."/>
            <person name="Matsumoto T."/>
        </authorList>
    </citation>
    <scope>GENOME REANNOTATION</scope>
    <source>
        <strain>cv. Nipponbare</strain>
    </source>
</reference>
<reference key="5">
    <citation type="journal article" date="2005" name="PLoS Biol.">
        <title>The genomes of Oryza sativa: a history of duplications.</title>
        <authorList>
            <person name="Yu J."/>
            <person name="Wang J."/>
            <person name="Lin W."/>
            <person name="Li S."/>
            <person name="Li H."/>
            <person name="Zhou J."/>
            <person name="Ni P."/>
            <person name="Dong W."/>
            <person name="Hu S."/>
            <person name="Zeng C."/>
            <person name="Zhang J."/>
            <person name="Zhang Y."/>
            <person name="Li R."/>
            <person name="Xu Z."/>
            <person name="Li S."/>
            <person name="Li X."/>
            <person name="Zheng H."/>
            <person name="Cong L."/>
            <person name="Lin L."/>
            <person name="Yin J."/>
            <person name="Geng J."/>
            <person name="Li G."/>
            <person name="Shi J."/>
            <person name="Liu J."/>
            <person name="Lv H."/>
            <person name="Li J."/>
            <person name="Wang J."/>
            <person name="Deng Y."/>
            <person name="Ran L."/>
            <person name="Shi X."/>
            <person name="Wang X."/>
            <person name="Wu Q."/>
            <person name="Li C."/>
            <person name="Ren X."/>
            <person name="Wang J."/>
            <person name="Wang X."/>
            <person name="Li D."/>
            <person name="Liu D."/>
            <person name="Zhang X."/>
            <person name="Ji Z."/>
            <person name="Zhao W."/>
            <person name="Sun Y."/>
            <person name="Zhang Z."/>
            <person name="Bao J."/>
            <person name="Han Y."/>
            <person name="Dong L."/>
            <person name="Ji J."/>
            <person name="Chen P."/>
            <person name="Wu S."/>
            <person name="Liu J."/>
            <person name="Xiao Y."/>
            <person name="Bu D."/>
            <person name="Tan J."/>
            <person name="Yang L."/>
            <person name="Ye C."/>
            <person name="Zhang J."/>
            <person name="Xu J."/>
            <person name="Zhou Y."/>
            <person name="Yu Y."/>
            <person name="Zhang B."/>
            <person name="Zhuang S."/>
            <person name="Wei H."/>
            <person name="Liu B."/>
            <person name="Lei M."/>
            <person name="Yu H."/>
            <person name="Li Y."/>
            <person name="Xu H."/>
            <person name="Wei S."/>
            <person name="He X."/>
            <person name="Fang L."/>
            <person name="Zhang Z."/>
            <person name="Zhang Y."/>
            <person name="Huang X."/>
            <person name="Su Z."/>
            <person name="Tong W."/>
            <person name="Li J."/>
            <person name="Tong Z."/>
            <person name="Li S."/>
            <person name="Ye J."/>
            <person name="Wang L."/>
            <person name="Fang L."/>
            <person name="Lei T."/>
            <person name="Chen C.-S."/>
            <person name="Chen H.-C."/>
            <person name="Xu Z."/>
            <person name="Li H."/>
            <person name="Huang H."/>
            <person name="Zhang F."/>
            <person name="Xu H."/>
            <person name="Li N."/>
            <person name="Zhao C."/>
            <person name="Li S."/>
            <person name="Dong L."/>
            <person name="Huang Y."/>
            <person name="Li L."/>
            <person name="Xi Y."/>
            <person name="Qi Q."/>
            <person name="Li W."/>
            <person name="Zhang B."/>
            <person name="Hu W."/>
            <person name="Zhang Y."/>
            <person name="Tian X."/>
            <person name="Jiao Y."/>
            <person name="Liang X."/>
            <person name="Jin J."/>
            <person name="Gao L."/>
            <person name="Zheng W."/>
            <person name="Hao B."/>
            <person name="Liu S.-M."/>
            <person name="Wang W."/>
            <person name="Yuan L."/>
            <person name="Cao M."/>
            <person name="McDermott J."/>
            <person name="Samudrala R."/>
            <person name="Wang J."/>
            <person name="Wong G.K.-S."/>
            <person name="Yang H."/>
        </authorList>
    </citation>
    <scope>NUCLEOTIDE SEQUENCE [LARGE SCALE GENOMIC DNA]</scope>
    <source>
        <strain>cv. Nipponbare</strain>
    </source>
</reference>
<reference key="6">
    <citation type="journal article" date="2003" name="Science">
        <title>Collection, mapping, and annotation of over 28,000 cDNA clones from japonica rice.</title>
        <authorList>
            <consortium name="The rice full-length cDNA consortium"/>
        </authorList>
    </citation>
    <scope>NUCLEOTIDE SEQUENCE [LARGE SCALE MRNA]</scope>
    <source>
        <strain>cv. Nipponbare</strain>
    </source>
</reference>
<reference key="7">
    <citation type="journal article" date="2007" name="FEBS J.">
        <title>Biochemical characterization of rice trehalose-6-phosphate phosphatases supports distinctive functions of these plant enzymes.</title>
        <authorList>
            <person name="Shima S."/>
            <person name="Matsui H."/>
            <person name="Tahara S."/>
            <person name="Imai R."/>
        </authorList>
    </citation>
    <scope>FUNCTION</scope>
    <scope>CATALYTIC ACTIVITY</scope>
    <scope>BIOPHYSICOCHEMICAL PROPERTIES</scope>
    <scope>TISSUE SPECIFICITY</scope>
    <scope>INDUCTION</scope>
</reference>
<reference key="8">
    <citation type="journal article" date="2008" name="Planta">
        <title>Overexpression of the trehalose-6-phosphate phosphatase gene OsTPP1 confers stress tolerance in rice and results in the activation of stress responsive genes.</title>
        <authorList>
            <person name="Ge L.F."/>
            <person name="Chao D.Y."/>
            <person name="Shi M."/>
            <person name="Zhu M.Z."/>
            <person name="Gao J.P."/>
            <person name="Lin H.X."/>
        </authorList>
    </citation>
    <scope>FUNCTION</scope>
    <scope>INDUCTION</scope>
</reference>
<accession>Q75WV3</accession>
<accession>A0A0P0VMN9</accession>
<proteinExistence type="evidence at protein level"/>
<sequence>MDLSNSSPVITDPVAISQQLLGGLPSNLMQFSVMPGGYSSSGMNVGVSRLKIEEVLVNGLLDAMKSSSPRRRLNVAFGEDNSSEEEDPAYSAWMAKCPSALASFKQIVASAQGKKIAVFLDYDGTLSPIVDDPDKAVMSPVMRAAVRNVAKYFPTAIVSGRSRNKVFEFVKLKELYYAGSHGMDIMAPSANHEHSAEKSKQANLFQPAHDFLPMIDEVTKSLLQVVSGIEGATVENNKFCVSVHYRNVAEKDWKLVARLVNEVLEAFPRLKVTNGRMVLEVRPVIDWDKGKAVEFLLQSLGLNDSENVIPIYIGDDRTDEDAFKVLRQRNCGYGILVSQVPKETEAFYSLRDPSEVMEFLNFLVRWKKHSV</sequence>
<feature type="chain" id="PRO_0000417653" description="Probable trehalose-phosphate phosphatase 1">
    <location>
        <begin position="1"/>
        <end position="371"/>
    </location>
</feature>
<organism>
    <name type="scientific">Oryza sativa subsp. japonica</name>
    <name type="common">Rice</name>
    <dbReference type="NCBI Taxonomy" id="39947"/>
    <lineage>
        <taxon>Eukaryota</taxon>
        <taxon>Viridiplantae</taxon>
        <taxon>Streptophyta</taxon>
        <taxon>Embryophyta</taxon>
        <taxon>Tracheophyta</taxon>
        <taxon>Spermatophyta</taxon>
        <taxon>Magnoliopsida</taxon>
        <taxon>Liliopsida</taxon>
        <taxon>Poales</taxon>
        <taxon>Poaceae</taxon>
        <taxon>BOP clade</taxon>
        <taxon>Oryzoideae</taxon>
        <taxon>Oryzeae</taxon>
        <taxon>Oryzinae</taxon>
        <taxon>Oryza</taxon>
        <taxon>Oryza sativa</taxon>
    </lineage>
</organism>
<dbReference type="EC" id="3.1.3.12"/>
<dbReference type="EMBL" id="AB120515">
    <property type="protein sequence ID" value="BAD12596.1"/>
    <property type="molecule type" value="mRNA"/>
</dbReference>
<dbReference type="EMBL" id="AP004883">
    <property type="protein sequence ID" value="BAD25622.1"/>
    <property type="molecule type" value="Genomic_DNA"/>
</dbReference>
<dbReference type="EMBL" id="AP005072">
    <property type="protein sequence ID" value="BAD25753.1"/>
    <property type="molecule type" value="Genomic_DNA"/>
</dbReference>
<dbReference type="EMBL" id="AP008208">
    <property type="protein sequence ID" value="BAF09559.1"/>
    <property type="molecule type" value="Genomic_DNA"/>
</dbReference>
<dbReference type="EMBL" id="AP014958">
    <property type="protein sequence ID" value="BAS80139.1"/>
    <property type="molecule type" value="Genomic_DNA"/>
</dbReference>
<dbReference type="EMBL" id="CM000139">
    <property type="protein sequence ID" value="EEE57517.1"/>
    <property type="molecule type" value="Genomic_DNA"/>
</dbReference>
<dbReference type="EMBL" id="AK103391">
    <property type="protein sequence ID" value="BAG96056.1"/>
    <property type="molecule type" value="mRNA"/>
</dbReference>
<dbReference type="RefSeq" id="XP_015623255.1">
    <property type="nucleotide sequence ID" value="XM_015767769.1"/>
</dbReference>
<dbReference type="SMR" id="Q75WV3"/>
<dbReference type="FunCoup" id="Q75WV3">
    <property type="interactions" value="141"/>
</dbReference>
<dbReference type="STRING" id="39947.Q75WV3"/>
<dbReference type="PaxDb" id="39947-Q75WV3"/>
<dbReference type="EnsemblPlants" id="Os02t0661100-01">
    <property type="protein sequence ID" value="Os02t0661100-01"/>
    <property type="gene ID" value="Os02g0661100"/>
</dbReference>
<dbReference type="Gramene" id="Os02t0661100-01">
    <property type="protein sequence ID" value="Os02t0661100-01"/>
    <property type="gene ID" value="Os02g0661100"/>
</dbReference>
<dbReference type="KEGG" id="dosa:Os02g0661100"/>
<dbReference type="eggNOG" id="KOG1050">
    <property type="taxonomic scope" value="Eukaryota"/>
</dbReference>
<dbReference type="InParanoid" id="Q75WV3"/>
<dbReference type="OMA" id="QPAQWAR"/>
<dbReference type="OrthoDB" id="411251at2759"/>
<dbReference type="BRENDA" id="3.1.3.12">
    <property type="organism ID" value="4460"/>
</dbReference>
<dbReference type="UniPathway" id="UPA00299"/>
<dbReference type="Proteomes" id="UP000000763">
    <property type="component" value="Chromosome 2"/>
</dbReference>
<dbReference type="Proteomes" id="UP000007752">
    <property type="component" value="Chromosome 2"/>
</dbReference>
<dbReference type="Proteomes" id="UP000059680">
    <property type="component" value="Chromosome 2"/>
</dbReference>
<dbReference type="ExpressionAtlas" id="Q75WV3">
    <property type="expression patterns" value="baseline and differential"/>
</dbReference>
<dbReference type="GO" id="GO:0004805">
    <property type="term" value="F:trehalose-phosphatase activity"/>
    <property type="evidence" value="ECO:0000314"/>
    <property type="project" value="UniProtKB"/>
</dbReference>
<dbReference type="GO" id="GO:0009409">
    <property type="term" value="P:response to cold"/>
    <property type="evidence" value="ECO:0000316"/>
    <property type="project" value="UniProtKB"/>
</dbReference>
<dbReference type="GO" id="GO:0009651">
    <property type="term" value="P:response to salt stress"/>
    <property type="evidence" value="ECO:0000316"/>
    <property type="project" value="UniProtKB"/>
</dbReference>
<dbReference type="GO" id="GO:0005992">
    <property type="term" value="P:trehalose biosynthetic process"/>
    <property type="evidence" value="ECO:0000314"/>
    <property type="project" value="UniProtKB"/>
</dbReference>
<dbReference type="CDD" id="cd01627">
    <property type="entry name" value="HAD_TPP"/>
    <property type="match status" value="1"/>
</dbReference>
<dbReference type="FunFam" id="3.40.50.1000:FF:000073">
    <property type="entry name" value="Trehalose 6-phosphate phosphatase"/>
    <property type="match status" value="1"/>
</dbReference>
<dbReference type="FunFam" id="3.40.50.1000:FF:000122">
    <property type="entry name" value="Trehalose 6-phosphate phosphatase"/>
    <property type="match status" value="1"/>
</dbReference>
<dbReference type="Gene3D" id="3.40.50.1000">
    <property type="entry name" value="HAD superfamily/HAD-like"/>
    <property type="match status" value="2"/>
</dbReference>
<dbReference type="InterPro" id="IPR036412">
    <property type="entry name" value="HAD-like_sf"/>
</dbReference>
<dbReference type="InterPro" id="IPR006379">
    <property type="entry name" value="HAD-SF_hydro_IIB"/>
</dbReference>
<dbReference type="InterPro" id="IPR023214">
    <property type="entry name" value="HAD_sf"/>
</dbReference>
<dbReference type="InterPro" id="IPR044651">
    <property type="entry name" value="OTSB-like"/>
</dbReference>
<dbReference type="InterPro" id="IPR003337">
    <property type="entry name" value="Trehalose_PPase"/>
</dbReference>
<dbReference type="NCBIfam" id="TIGR01484">
    <property type="entry name" value="HAD-SF-IIB"/>
    <property type="match status" value="1"/>
</dbReference>
<dbReference type="NCBIfam" id="TIGR00685">
    <property type="entry name" value="T6PP"/>
    <property type="match status" value="1"/>
</dbReference>
<dbReference type="PANTHER" id="PTHR43768">
    <property type="entry name" value="TREHALOSE 6-PHOSPHATE PHOSPHATASE"/>
    <property type="match status" value="1"/>
</dbReference>
<dbReference type="PANTHER" id="PTHR43768:SF23">
    <property type="entry name" value="TREHALOSE-PHOSPHATE PHOSPHATASE 1-RELATED"/>
    <property type="match status" value="1"/>
</dbReference>
<dbReference type="Pfam" id="PF02358">
    <property type="entry name" value="Trehalose_PPase"/>
    <property type="match status" value="1"/>
</dbReference>
<dbReference type="SUPFAM" id="SSF56784">
    <property type="entry name" value="HAD-like"/>
    <property type="match status" value="1"/>
</dbReference>
<keyword id="KW-0378">Hydrolase</keyword>
<keyword id="KW-1185">Reference proteome</keyword>
<keyword id="KW-0346">Stress response</keyword>
<name>TPP1_ORYSJ</name>